<feature type="chain" id="PRO_0000344959" description="Ribonuclease Y">
    <location>
        <begin position="1"/>
        <end position="515"/>
    </location>
</feature>
<feature type="transmembrane region" description="Helical" evidence="1">
    <location>
        <begin position="6"/>
        <end position="26"/>
    </location>
</feature>
<feature type="domain" description="KH" evidence="1">
    <location>
        <begin position="205"/>
        <end position="290"/>
    </location>
</feature>
<feature type="domain" description="HD" evidence="2">
    <location>
        <begin position="331"/>
        <end position="424"/>
    </location>
</feature>
<comment type="function">
    <text evidence="1">Endoribonuclease that initiates mRNA decay.</text>
</comment>
<comment type="subcellular location">
    <subcellularLocation>
        <location evidence="1">Cell membrane</location>
        <topology evidence="1">Single-pass membrane protein</topology>
    </subcellularLocation>
</comment>
<comment type="similarity">
    <text evidence="1">Belongs to the RNase Y family.</text>
</comment>
<evidence type="ECO:0000255" key="1">
    <source>
        <dbReference type="HAMAP-Rule" id="MF_00335"/>
    </source>
</evidence>
<evidence type="ECO:0000255" key="2">
    <source>
        <dbReference type="PROSITE-ProRule" id="PRU01175"/>
    </source>
</evidence>
<protein>
    <recommendedName>
        <fullName evidence="1">Ribonuclease Y</fullName>
        <shortName evidence="1">RNase Y</shortName>
        <ecNumber evidence="1">3.1.-.-</ecNumber>
    </recommendedName>
</protein>
<keyword id="KW-1003">Cell membrane</keyword>
<keyword id="KW-0255">Endonuclease</keyword>
<keyword id="KW-0378">Hydrolase</keyword>
<keyword id="KW-0472">Membrane</keyword>
<keyword id="KW-0540">Nuclease</keyword>
<keyword id="KW-1185">Reference proteome</keyword>
<keyword id="KW-0694">RNA-binding</keyword>
<keyword id="KW-0812">Transmembrane</keyword>
<keyword id="KW-1133">Transmembrane helix</keyword>
<gene>
    <name evidence="1" type="primary">rny</name>
    <name type="ordered locus">Swol_1254</name>
</gene>
<reference key="1">
    <citation type="journal article" date="2010" name="Environ. Microbiol.">
        <title>The genome of Syntrophomonas wolfei: new insights into syntrophic metabolism and biohydrogen production.</title>
        <authorList>
            <person name="Sieber J.R."/>
            <person name="Sims D.R."/>
            <person name="Han C."/>
            <person name="Kim E."/>
            <person name="Lykidis A."/>
            <person name="Lapidus A.L."/>
            <person name="McDonnald E."/>
            <person name="Rohlin L."/>
            <person name="Culley D.E."/>
            <person name="Gunsalus R."/>
            <person name="McInerney M.J."/>
        </authorList>
    </citation>
    <scope>NUCLEOTIDE SEQUENCE [LARGE SCALE GENOMIC DNA]</scope>
    <source>
        <strain>DSM 2245B / Goettingen</strain>
    </source>
</reference>
<sequence length="515" mass="58197">MIEIDLTSFVIITLSLAVGLTGGYYGRRFLAESRIRTAEEEVAKMLDEAAKEVEAKKKEILLEAKDEIHRNRQDAEKDIRERRRELDRVERRIIQKEEMIDKKTENMEKKEQVLLEKEKETEKTQQDLQMVLSQQLKELERLSGLSSEEAKELLLYNVSQQIRQETAVLIRNIENEAKEEADKKAKNIVSLAIQKCAADVVSESTVSVVPLPNDEMKGRIIGREGRNIRTFEALSGVDLIIDDTPEAVILSSFDPIRREVARVALGNLVSDGRIHPARIEEMVEKARKEIEQEIREVGEQAAFEVGVHGLHPELIKLLGRLKYRTSYGQNVLRHSVEVAHLAGIMAAELEVDIMLAKRSGLLHDIGKAVDHEVSGPHVEIGVDLAKKYRENKDVIHGIEAHHGDIEPETVEAVLVQAADAISASRPGARRETLETYIKRLEKLENVAESFSGVDRTFAIQAGREIRIIVKPEEIDDLHSINLARDIAAKIEQDLDYPGQIKVVVIRETRSVEYAK</sequence>
<organism>
    <name type="scientific">Syntrophomonas wolfei subsp. wolfei (strain DSM 2245B / Goettingen)</name>
    <dbReference type="NCBI Taxonomy" id="335541"/>
    <lineage>
        <taxon>Bacteria</taxon>
        <taxon>Bacillati</taxon>
        <taxon>Bacillota</taxon>
        <taxon>Clostridia</taxon>
        <taxon>Eubacteriales</taxon>
        <taxon>Syntrophomonadaceae</taxon>
        <taxon>Syntrophomonas</taxon>
    </lineage>
</organism>
<proteinExistence type="inferred from homology"/>
<name>RNY_SYNWW</name>
<accession>Q0AXJ1</accession>
<dbReference type="EC" id="3.1.-.-" evidence="1"/>
<dbReference type="EMBL" id="CP000448">
    <property type="protein sequence ID" value="ABI68563.1"/>
    <property type="molecule type" value="Genomic_DNA"/>
</dbReference>
<dbReference type="SMR" id="Q0AXJ1"/>
<dbReference type="STRING" id="335541.Swol_1254"/>
<dbReference type="KEGG" id="swo:Swol_1254"/>
<dbReference type="eggNOG" id="COG1418">
    <property type="taxonomic scope" value="Bacteria"/>
</dbReference>
<dbReference type="HOGENOM" id="CLU_028328_1_0_9"/>
<dbReference type="Proteomes" id="UP000001968">
    <property type="component" value="Chromosome"/>
</dbReference>
<dbReference type="GO" id="GO:0005886">
    <property type="term" value="C:plasma membrane"/>
    <property type="evidence" value="ECO:0007669"/>
    <property type="project" value="UniProtKB-SubCell"/>
</dbReference>
<dbReference type="GO" id="GO:0003723">
    <property type="term" value="F:RNA binding"/>
    <property type="evidence" value="ECO:0007669"/>
    <property type="project" value="UniProtKB-UniRule"/>
</dbReference>
<dbReference type="GO" id="GO:0004521">
    <property type="term" value="F:RNA endonuclease activity"/>
    <property type="evidence" value="ECO:0007669"/>
    <property type="project" value="UniProtKB-UniRule"/>
</dbReference>
<dbReference type="GO" id="GO:0006402">
    <property type="term" value="P:mRNA catabolic process"/>
    <property type="evidence" value="ECO:0007669"/>
    <property type="project" value="UniProtKB-UniRule"/>
</dbReference>
<dbReference type="CDD" id="cd00077">
    <property type="entry name" value="HDc"/>
    <property type="match status" value="1"/>
</dbReference>
<dbReference type="CDD" id="cd22431">
    <property type="entry name" value="KH-I_RNaseY"/>
    <property type="match status" value="1"/>
</dbReference>
<dbReference type="FunFam" id="1.10.3210.10:FF:000022">
    <property type="entry name" value="Ribonuclease Y"/>
    <property type="match status" value="1"/>
</dbReference>
<dbReference type="FunFam" id="3.30.1370.10:FF:000006">
    <property type="entry name" value="Ribonuclease Y"/>
    <property type="match status" value="1"/>
</dbReference>
<dbReference type="Gene3D" id="1.10.3210.10">
    <property type="entry name" value="Hypothetical protein af1432"/>
    <property type="match status" value="1"/>
</dbReference>
<dbReference type="Gene3D" id="3.30.1370.10">
    <property type="entry name" value="K Homology domain, type 1"/>
    <property type="match status" value="1"/>
</dbReference>
<dbReference type="HAMAP" id="MF_00335">
    <property type="entry name" value="RNase_Y"/>
    <property type="match status" value="1"/>
</dbReference>
<dbReference type="InterPro" id="IPR003607">
    <property type="entry name" value="HD/PDEase_dom"/>
</dbReference>
<dbReference type="InterPro" id="IPR006674">
    <property type="entry name" value="HD_domain"/>
</dbReference>
<dbReference type="InterPro" id="IPR006675">
    <property type="entry name" value="HDIG_dom"/>
</dbReference>
<dbReference type="InterPro" id="IPR004087">
    <property type="entry name" value="KH_dom"/>
</dbReference>
<dbReference type="InterPro" id="IPR004088">
    <property type="entry name" value="KH_dom_type_1"/>
</dbReference>
<dbReference type="InterPro" id="IPR036612">
    <property type="entry name" value="KH_dom_type_1_sf"/>
</dbReference>
<dbReference type="InterPro" id="IPR017705">
    <property type="entry name" value="Ribonuclease_Y"/>
</dbReference>
<dbReference type="InterPro" id="IPR022711">
    <property type="entry name" value="RNase_Y_N"/>
</dbReference>
<dbReference type="NCBIfam" id="TIGR00277">
    <property type="entry name" value="HDIG"/>
    <property type="match status" value="1"/>
</dbReference>
<dbReference type="NCBIfam" id="TIGR03319">
    <property type="entry name" value="RNase_Y"/>
    <property type="match status" value="1"/>
</dbReference>
<dbReference type="PANTHER" id="PTHR12826">
    <property type="entry name" value="RIBONUCLEASE Y"/>
    <property type="match status" value="1"/>
</dbReference>
<dbReference type="PANTHER" id="PTHR12826:SF15">
    <property type="entry name" value="RIBONUCLEASE Y"/>
    <property type="match status" value="1"/>
</dbReference>
<dbReference type="Pfam" id="PF01966">
    <property type="entry name" value="HD"/>
    <property type="match status" value="1"/>
</dbReference>
<dbReference type="Pfam" id="PF00013">
    <property type="entry name" value="KH_1"/>
    <property type="match status" value="1"/>
</dbReference>
<dbReference type="Pfam" id="PF12072">
    <property type="entry name" value="RNase_Y_N"/>
    <property type="match status" value="1"/>
</dbReference>
<dbReference type="SMART" id="SM00471">
    <property type="entry name" value="HDc"/>
    <property type="match status" value="1"/>
</dbReference>
<dbReference type="SMART" id="SM00322">
    <property type="entry name" value="KH"/>
    <property type="match status" value="1"/>
</dbReference>
<dbReference type="SUPFAM" id="SSF54791">
    <property type="entry name" value="Eukaryotic type KH-domain (KH-domain type I)"/>
    <property type="match status" value="1"/>
</dbReference>
<dbReference type="SUPFAM" id="SSF109604">
    <property type="entry name" value="HD-domain/PDEase-like"/>
    <property type="match status" value="1"/>
</dbReference>
<dbReference type="PROSITE" id="PS51831">
    <property type="entry name" value="HD"/>
    <property type="match status" value="1"/>
</dbReference>
<dbReference type="PROSITE" id="PS50084">
    <property type="entry name" value="KH_TYPE_1"/>
    <property type="match status" value="1"/>
</dbReference>